<dbReference type="EC" id="2.7.7.4" evidence="1"/>
<dbReference type="EMBL" id="CU928161">
    <property type="protein sequence ID" value="CAR04267.1"/>
    <property type="molecule type" value="Genomic_DNA"/>
</dbReference>
<dbReference type="RefSeq" id="WP_000372397.1">
    <property type="nucleotide sequence ID" value="NC_011742.1"/>
</dbReference>
<dbReference type="SMR" id="B7MKM6"/>
<dbReference type="KEGG" id="ecz:ECS88_3023"/>
<dbReference type="HOGENOM" id="CLU_043026_0_0_6"/>
<dbReference type="UniPathway" id="UPA00140">
    <property type="reaction ID" value="UER00204"/>
</dbReference>
<dbReference type="Proteomes" id="UP000000747">
    <property type="component" value="Chromosome"/>
</dbReference>
<dbReference type="GO" id="GO:0005524">
    <property type="term" value="F:ATP binding"/>
    <property type="evidence" value="ECO:0007669"/>
    <property type="project" value="UniProtKB-KW"/>
</dbReference>
<dbReference type="GO" id="GO:0004781">
    <property type="term" value="F:sulfate adenylyltransferase (ATP) activity"/>
    <property type="evidence" value="ECO:0007669"/>
    <property type="project" value="UniProtKB-UniRule"/>
</dbReference>
<dbReference type="GO" id="GO:0070814">
    <property type="term" value="P:hydrogen sulfide biosynthetic process"/>
    <property type="evidence" value="ECO:0007669"/>
    <property type="project" value="UniProtKB-UniRule"/>
</dbReference>
<dbReference type="GO" id="GO:0000103">
    <property type="term" value="P:sulfate assimilation"/>
    <property type="evidence" value="ECO:0007669"/>
    <property type="project" value="UniProtKB-UniRule"/>
</dbReference>
<dbReference type="CDD" id="cd23946">
    <property type="entry name" value="Sulfate_adenylyltransferase_2"/>
    <property type="match status" value="1"/>
</dbReference>
<dbReference type="FunFam" id="3.40.50.620:FF:000002">
    <property type="entry name" value="Sulfate adenylyltransferase subunit 2"/>
    <property type="match status" value="1"/>
</dbReference>
<dbReference type="Gene3D" id="3.40.50.620">
    <property type="entry name" value="HUPs"/>
    <property type="match status" value="1"/>
</dbReference>
<dbReference type="HAMAP" id="MF_00064">
    <property type="entry name" value="Sulf_adenylyltr_sub2"/>
    <property type="match status" value="1"/>
</dbReference>
<dbReference type="InterPro" id="IPR002500">
    <property type="entry name" value="PAPS_reduct_dom"/>
</dbReference>
<dbReference type="InterPro" id="IPR014729">
    <property type="entry name" value="Rossmann-like_a/b/a_fold"/>
</dbReference>
<dbReference type="InterPro" id="IPR011784">
    <property type="entry name" value="SO4_adenylTrfase_ssu"/>
</dbReference>
<dbReference type="InterPro" id="IPR050128">
    <property type="entry name" value="Sulfate_adenylyltrnsfr_sub2"/>
</dbReference>
<dbReference type="NCBIfam" id="TIGR02039">
    <property type="entry name" value="CysD"/>
    <property type="match status" value="1"/>
</dbReference>
<dbReference type="NCBIfam" id="NF003587">
    <property type="entry name" value="PRK05253.1"/>
    <property type="match status" value="1"/>
</dbReference>
<dbReference type="NCBIfam" id="NF009214">
    <property type="entry name" value="PRK12563.1"/>
    <property type="match status" value="1"/>
</dbReference>
<dbReference type="PANTHER" id="PTHR43196">
    <property type="entry name" value="SULFATE ADENYLYLTRANSFERASE SUBUNIT 2"/>
    <property type="match status" value="1"/>
</dbReference>
<dbReference type="PANTHER" id="PTHR43196:SF1">
    <property type="entry name" value="SULFATE ADENYLYLTRANSFERASE SUBUNIT 2"/>
    <property type="match status" value="1"/>
</dbReference>
<dbReference type="Pfam" id="PF01507">
    <property type="entry name" value="PAPS_reduct"/>
    <property type="match status" value="1"/>
</dbReference>
<dbReference type="PIRSF" id="PIRSF002936">
    <property type="entry name" value="CysDAde_trans"/>
    <property type="match status" value="1"/>
</dbReference>
<dbReference type="SUPFAM" id="SSF52402">
    <property type="entry name" value="Adenine nucleotide alpha hydrolases-like"/>
    <property type="match status" value="1"/>
</dbReference>
<reference key="1">
    <citation type="journal article" date="2009" name="PLoS Genet.">
        <title>Organised genome dynamics in the Escherichia coli species results in highly diverse adaptive paths.</title>
        <authorList>
            <person name="Touchon M."/>
            <person name="Hoede C."/>
            <person name="Tenaillon O."/>
            <person name="Barbe V."/>
            <person name="Baeriswyl S."/>
            <person name="Bidet P."/>
            <person name="Bingen E."/>
            <person name="Bonacorsi S."/>
            <person name="Bouchier C."/>
            <person name="Bouvet O."/>
            <person name="Calteau A."/>
            <person name="Chiapello H."/>
            <person name="Clermont O."/>
            <person name="Cruveiller S."/>
            <person name="Danchin A."/>
            <person name="Diard M."/>
            <person name="Dossat C."/>
            <person name="Karoui M.E."/>
            <person name="Frapy E."/>
            <person name="Garry L."/>
            <person name="Ghigo J.M."/>
            <person name="Gilles A.M."/>
            <person name="Johnson J."/>
            <person name="Le Bouguenec C."/>
            <person name="Lescat M."/>
            <person name="Mangenot S."/>
            <person name="Martinez-Jehanne V."/>
            <person name="Matic I."/>
            <person name="Nassif X."/>
            <person name="Oztas S."/>
            <person name="Petit M.A."/>
            <person name="Pichon C."/>
            <person name="Rouy Z."/>
            <person name="Ruf C.S."/>
            <person name="Schneider D."/>
            <person name="Tourret J."/>
            <person name="Vacherie B."/>
            <person name="Vallenet D."/>
            <person name="Medigue C."/>
            <person name="Rocha E.P.C."/>
            <person name="Denamur E."/>
        </authorList>
    </citation>
    <scope>NUCLEOTIDE SEQUENCE [LARGE SCALE GENOMIC DNA]</scope>
    <source>
        <strain>S88 / ExPEC</strain>
    </source>
</reference>
<name>CYSD_ECO45</name>
<comment type="function">
    <text evidence="1">With CysN forms the ATP sulfurylase (ATPS) that catalyzes the adenylation of sulfate producing adenosine 5'-phosphosulfate (APS) and diphosphate, the first enzymatic step in sulfur assimilation pathway. APS synthesis involves the formation of a high-energy phosphoric-sulfuric acid anhydride bond driven by GTP hydrolysis by CysN coupled to ATP hydrolysis by CysD.</text>
</comment>
<comment type="catalytic activity">
    <reaction evidence="1">
        <text>sulfate + ATP + H(+) = adenosine 5'-phosphosulfate + diphosphate</text>
        <dbReference type="Rhea" id="RHEA:18133"/>
        <dbReference type="ChEBI" id="CHEBI:15378"/>
        <dbReference type="ChEBI" id="CHEBI:16189"/>
        <dbReference type="ChEBI" id="CHEBI:30616"/>
        <dbReference type="ChEBI" id="CHEBI:33019"/>
        <dbReference type="ChEBI" id="CHEBI:58243"/>
        <dbReference type="EC" id="2.7.7.4"/>
    </reaction>
</comment>
<comment type="pathway">
    <text evidence="1">Sulfur metabolism; hydrogen sulfide biosynthesis; sulfite from sulfate: step 1/3.</text>
</comment>
<comment type="subunit">
    <text evidence="1">Heterodimer composed of CysD, the smaller subunit, and CysN.</text>
</comment>
<comment type="similarity">
    <text evidence="1">Belongs to the PAPS reductase family. CysD subfamily.</text>
</comment>
<gene>
    <name evidence="1" type="primary">cysD</name>
    <name type="ordered locus">ECS88_3023</name>
</gene>
<evidence type="ECO:0000255" key="1">
    <source>
        <dbReference type="HAMAP-Rule" id="MF_00064"/>
    </source>
</evidence>
<feature type="chain" id="PRO_1000116956" description="Sulfate adenylyltransferase subunit 2">
    <location>
        <begin position="1"/>
        <end position="302"/>
    </location>
</feature>
<protein>
    <recommendedName>
        <fullName evidence="1">Sulfate adenylyltransferase subunit 2</fullName>
        <ecNumber evidence="1">2.7.7.4</ecNumber>
    </recommendedName>
    <alternativeName>
        <fullName evidence="1">ATP-sulfurylase small subunit</fullName>
    </alternativeName>
    <alternativeName>
        <fullName evidence="1">Sulfate adenylate transferase</fullName>
        <shortName evidence="1">SAT</shortName>
    </alternativeName>
</protein>
<sequence length="302" mass="35192">MDQKRLTHLRQLEAESIHIIREVAAEFSNPVMLYSIGKDSSVMLHLARKAFYPGTLPFPLLHVDTGWKFREMYEFRDRTAKAYGCELLVHKNPEGVAMGINPFVHGSAKHTDIMKTEGLKQALNKYGFDAAFGGARRDEEKSRAKERIYSFRDRFHRWDPKNQRPELWHNYNGQINKGESIRVFPLSNWTEQDIWQYIWLENIDIVPLYLAAERPVLERDGMLMMIDDNRINLQSGEVIKKRMVRFRTLGCWPLTGAVESNAQTLPEIIEEMLVSTTSERQGRVIDRDQAGSMELKKRQGYF</sequence>
<keyword id="KW-0067">ATP-binding</keyword>
<keyword id="KW-0547">Nucleotide-binding</keyword>
<keyword id="KW-0548">Nucleotidyltransferase</keyword>
<keyword id="KW-1185">Reference proteome</keyword>
<keyword id="KW-0808">Transferase</keyword>
<proteinExistence type="inferred from homology"/>
<organism>
    <name type="scientific">Escherichia coli O45:K1 (strain S88 / ExPEC)</name>
    <dbReference type="NCBI Taxonomy" id="585035"/>
    <lineage>
        <taxon>Bacteria</taxon>
        <taxon>Pseudomonadati</taxon>
        <taxon>Pseudomonadota</taxon>
        <taxon>Gammaproteobacteria</taxon>
        <taxon>Enterobacterales</taxon>
        <taxon>Enterobacteriaceae</taxon>
        <taxon>Escherichia</taxon>
    </lineage>
</organism>
<accession>B7MKM6</accession>